<reference key="1">
    <citation type="journal article" date="2010" name="J. Bacteriol.">
        <title>Whole genome sequences of two Xylella fastidiosa strains (M12 and M23) causing almond leaf scorch disease in California.</title>
        <authorList>
            <person name="Chen J."/>
            <person name="Xie G."/>
            <person name="Han S."/>
            <person name="Chertkov O."/>
            <person name="Sims D."/>
            <person name="Civerolo E.L."/>
        </authorList>
    </citation>
    <scope>NUCLEOTIDE SEQUENCE [LARGE SCALE GENOMIC DNA]</scope>
    <source>
        <strain>M23</strain>
    </source>
</reference>
<protein>
    <recommendedName>
        <fullName evidence="1">Ribosomal RNA large subunit methyltransferase E</fullName>
        <ecNumber evidence="1">2.1.1.166</ecNumber>
    </recommendedName>
    <alternativeName>
        <fullName evidence="1">23S rRNA Um2552 methyltransferase</fullName>
    </alternativeName>
    <alternativeName>
        <fullName evidence="1">rRNA (uridine-2'-O-)-methyltransferase</fullName>
    </alternativeName>
</protein>
<gene>
    <name evidence="1" type="primary">rlmE</name>
    <name evidence="1" type="synonym">ftsJ</name>
    <name evidence="1" type="synonym">rrmJ</name>
    <name type="ordered locus">XfasM23_0063</name>
</gene>
<keyword id="KW-0963">Cytoplasm</keyword>
<keyword id="KW-0489">Methyltransferase</keyword>
<keyword id="KW-0698">rRNA processing</keyword>
<keyword id="KW-0949">S-adenosyl-L-methionine</keyword>
<keyword id="KW-0808">Transferase</keyword>
<name>RLME_XYLF2</name>
<evidence type="ECO:0000255" key="1">
    <source>
        <dbReference type="HAMAP-Rule" id="MF_01547"/>
    </source>
</evidence>
<dbReference type="EC" id="2.1.1.166" evidence="1"/>
<dbReference type="EMBL" id="CP001011">
    <property type="protein sequence ID" value="ACB91520.1"/>
    <property type="molecule type" value="Genomic_DNA"/>
</dbReference>
<dbReference type="RefSeq" id="WP_004087670.1">
    <property type="nucleotide sequence ID" value="NC_010577.1"/>
</dbReference>
<dbReference type="SMR" id="B2I696"/>
<dbReference type="KEGG" id="xfn:XfasM23_0063"/>
<dbReference type="HOGENOM" id="CLU_009422_4_0_6"/>
<dbReference type="Proteomes" id="UP000001698">
    <property type="component" value="Chromosome"/>
</dbReference>
<dbReference type="GO" id="GO:0005737">
    <property type="term" value="C:cytoplasm"/>
    <property type="evidence" value="ECO:0007669"/>
    <property type="project" value="UniProtKB-SubCell"/>
</dbReference>
<dbReference type="GO" id="GO:0008650">
    <property type="term" value="F:rRNA (uridine-2'-O-)-methyltransferase activity"/>
    <property type="evidence" value="ECO:0007669"/>
    <property type="project" value="UniProtKB-UniRule"/>
</dbReference>
<dbReference type="FunFam" id="3.40.50.150:FF:000005">
    <property type="entry name" value="Ribosomal RNA large subunit methyltransferase E"/>
    <property type="match status" value="1"/>
</dbReference>
<dbReference type="Gene3D" id="3.40.50.150">
    <property type="entry name" value="Vaccinia Virus protein VP39"/>
    <property type="match status" value="1"/>
</dbReference>
<dbReference type="HAMAP" id="MF_01547">
    <property type="entry name" value="RNA_methyltr_E"/>
    <property type="match status" value="1"/>
</dbReference>
<dbReference type="InterPro" id="IPR050082">
    <property type="entry name" value="RNA_methyltr_RlmE"/>
</dbReference>
<dbReference type="InterPro" id="IPR002877">
    <property type="entry name" value="RNA_MeTrfase_FtsJ_dom"/>
</dbReference>
<dbReference type="InterPro" id="IPR015507">
    <property type="entry name" value="rRNA-MeTfrase_E"/>
</dbReference>
<dbReference type="InterPro" id="IPR029063">
    <property type="entry name" value="SAM-dependent_MTases_sf"/>
</dbReference>
<dbReference type="PANTHER" id="PTHR10920">
    <property type="entry name" value="RIBOSOMAL RNA METHYLTRANSFERASE"/>
    <property type="match status" value="1"/>
</dbReference>
<dbReference type="PANTHER" id="PTHR10920:SF18">
    <property type="entry name" value="RRNA METHYLTRANSFERASE 2, MITOCHONDRIAL"/>
    <property type="match status" value="1"/>
</dbReference>
<dbReference type="Pfam" id="PF01728">
    <property type="entry name" value="FtsJ"/>
    <property type="match status" value="1"/>
</dbReference>
<dbReference type="PIRSF" id="PIRSF005461">
    <property type="entry name" value="23S_rRNA_mtase"/>
    <property type="match status" value="1"/>
</dbReference>
<dbReference type="SUPFAM" id="SSF53335">
    <property type="entry name" value="S-adenosyl-L-methionine-dependent methyltransferases"/>
    <property type="match status" value="1"/>
</dbReference>
<comment type="function">
    <text evidence="1">Specifically methylates the uridine in position 2552 of 23S rRNA at the 2'-O position of the ribose in the fully assembled 50S ribosomal subunit.</text>
</comment>
<comment type="catalytic activity">
    <reaction evidence="1">
        <text>uridine(2552) in 23S rRNA + S-adenosyl-L-methionine = 2'-O-methyluridine(2552) in 23S rRNA + S-adenosyl-L-homocysteine + H(+)</text>
        <dbReference type="Rhea" id="RHEA:42720"/>
        <dbReference type="Rhea" id="RHEA-COMP:10202"/>
        <dbReference type="Rhea" id="RHEA-COMP:10203"/>
        <dbReference type="ChEBI" id="CHEBI:15378"/>
        <dbReference type="ChEBI" id="CHEBI:57856"/>
        <dbReference type="ChEBI" id="CHEBI:59789"/>
        <dbReference type="ChEBI" id="CHEBI:65315"/>
        <dbReference type="ChEBI" id="CHEBI:74478"/>
        <dbReference type="EC" id="2.1.1.166"/>
    </reaction>
</comment>
<comment type="subcellular location">
    <subcellularLocation>
        <location evidence="1">Cytoplasm</location>
    </subcellularLocation>
</comment>
<comment type="similarity">
    <text evidence="1">Belongs to the class I-like SAM-binding methyltransferase superfamily. RNA methyltransferase RlmE family.</text>
</comment>
<organism>
    <name type="scientific">Xylella fastidiosa (strain M23)</name>
    <dbReference type="NCBI Taxonomy" id="405441"/>
    <lineage>
        <taxon>Bacteria</taxon>
        <taxon>Pseudomonadati</taxon>
        <taxon>Pseudomonadota</taxon>
        <taxon>Gammaproteobacteria</taxon>
        <taxon>Lysobacterales</taxon>
        <taxon>Lysobacteraceae</taxon>
        <taxon>Xylella</taxon>
    </lineage>
</organism>
<accession>B2I696</accession>
<proteinExistence type="inferred from homology"/>
<sequence length="213" mass="23951">MSHSKSSQRWLKEHFSDPFVKKAQAEGMRSRAAYKLEEILKRDRILRPNMVVIDLGAAPGGWSQQIRKQMGDSGRVIALDIVKMAPLVGIEFLQGDFRDKAVLSQLEIMLKGQPVDLVLSDMAPNKSGIDVMDQPRMMYLAELAMDFADIHVKPGGSFLIKLFHGVGSDGYIRQLRHRYKKVAIRKPLASRKRSPEVYILGDGKLTQNEVSCS</sequence>
<feature type="chain" id="PRO_1000195031" description="Ribosomal RNA large subunit methyltransferase E">
    <location>
        <begin position="1"/>
        <end position="213"/>
    </location>
</feature>
<feature type="active site" description="Proton acceptor" evidence="1">
    <location>
        <position position="161"/>
    </location>
</feature>
<feature type="binding site" evidence="1">
    <location>
        <position position="60"/>
    </location>
    <ligand>
        <name>S-adenosyl-L-methionine</name>
        <dbReference type="ChEBI" id="CHEBI:59789"/>
    </ligand>
</feature>
<feature type="binding site" evidence="1">
    <location>
        <position position="62"/>
    </location>
    <ligand>
        <name>S-adenosyl-L-methionine</name>
        <dbReference type="ChEBI" id="CHEBI:59789"/>
    </ligand>
</feature>
<feature type="binding site" evidence="1">
    <location>
        <position position="80"/>
    </location>
    <ligand>
        <name>S-adenosyl-L-methionine</name>
        <dbReference type="ChEBI" id="CHEBI:59789"/>
    </ligand>
</feature>
<feature type="binding site" evidence="1">
    <location>
        <position position="96"/>
    </location>
    <ligand>
        <name>S-adenosyl-L-methionine</name>
        <dbReference type="ChEBI" id="CHEBI:59789"/>
    </ligand>
</feature>
<feature type="binding site" evidence="1">
    <location>
        <position position="121"/>
    </location>
    <ligand>
        <name>S-adenosyl-L-methionine</name>
        <dbReference type="ChEBI" id="CHEBI:59789"/>
    </ligand>
</feature>